<organism>
    <name type="scientific">Danio rerio</name>
    <name type="common">Zebrafish</name>
    <name type="synonym">Brachydanio rerio</name>
    <dbReference type="NCBI Taxonomy" id="7955"/>
    <lineage>
        <taxon>Eukaryota</taxon>
        <taxon>Metazoa</taxon>
        <taxon>Chordata</taxon>
        <taxon>Craniata</taxon>
        <taxon>Vertebrata</taxon>
        <taxon>Euteleostomi</taxon>
        <taxon>Actinopterygii</taxon>
        <taxon>Neopterygii</taxon>
        <taxon>Teleostei</taxon>
        <taxon>Ostariophysi</taxon>
        <taxon>Cypriniformes</taxon>
        <taxon>Danionidae</taxon>
        <taxon>Danioninae</taxon>
        <taxon>Danio</taxon>
    </lineage>
</organism>
<dbReference type="EMBL" id="JN088213">
    <property type="protein sequence ID" value="AEH76002.1"/>
    <property type="molecule type" value="mRNA"/>
</dbReference>
<dbReference type="SMR" id="H6D7E6"/>
<dbReference type="FunCoup" id="H6D7E6">
    <property type="interactions" value="1470"/>
</dbReference>
<dbReference type="STRING" id="7955.ENSDARP00000131742"/>
<dbReference type="PaxDb" id="7955-ENSDARP00000129806"/>
<dbReference type="KEGG" id="dre:100884142"/>
<dbReference type="AGR" id="ZFIN:ZDB-GENE-120119-1"/>
<dbReference type="ZFIN" id="ZDB-GENE-120119-1">
    <property type="gene designation" value="si:ch211-185a18.2"/>
</dbReference>
<dbReference type="eggNOG" id="ENOG502QUXJ">
    <property type="taxonomic scope" value="Eukaryota"/>
</dbReference>
<dbReference type="InParanoid" id="H6D7E6"/>
<dbReference type="OrthoDB" id="10057439at2759"/>
<dbReference type="PRO" id="PR:H6D7E6"/>
<dbReference type="Proteomes" id="UP000000437">
    <property type="component" value="Chromosome 17"/>
</dbReference>
<dbReference type="GO" id="GO:0005814">
    <property type="term" value="C:centriole"/>
    <property type="evidence" value="ECO:0000314"/>
    <property type="project" value="UniProtKB"/>
</dbReference>
<dbReference type="GO" id="GO:0036064">
    <property type="term" value="C:ciliary basal body"/>
    <property type="evidence" value="ECO:0000314"/>
    <property type="project" value="UniProtKB"/>
</dbReference>
<dbReference type="GO" id="GO:0005737">
    <property type="term" value="C:cytoplasm"/>
    <property type="evidence" value="ECO:0007669"/>
    <property type="project" value="UniProtKB-KW"/>
</dbReference>
<dbReference type="GO" id="GO:0060271">
    <property type="term" value="P:cilium assembly"/>
    <property type="evidence" value="ECO:0000315"/>
    <property type="project" value="ZFIN"/>
</dbReference>
<dbReference type="GO" id="GO:0035845">
    <property type="term" value="P:photoreceptor cell outer segment organization"/>
    <property type="evidence" value="ECO:0000315"/>
    <property type="project" value="ZFIN"/>
</dbReference>
<dbReference type="GO" id="GO:0007224">
    <property type="term" value="P:smoothened signaling pathway"/>
    <property type="evidence" value="ECO:0000315"/>
    <property type="project" value="ZFIN"/>
</dbReference>
<dbReference type="InterPro" id="IPR029246">
    <property type="entry name" value="TALPID3"/>
</dbReference>
<dbReference type="PANTHER" id="PTHR15721">
    <property type="entry name" value="KIAA0586 PROTEIN"/>
    <property type="match status" value="1"/>
</dbReference>
<dbReference type="PANTHER" id="PTHR15721:SF2">
    <property type="entry name" value="PROTEIN TALPID3"/>
    <property type="match status" value="1"/>
</dbReference>
<dbReference type="Pfam" id="PF15324">
    <property type="entry name" value="TALPID3"/>
    <property type="match status" value="1"/>
</dbReference>
<protein>
    <recommendedName>
        <fullName>Protein TALPID3</fullName>
    </recommendedName>
</protein>
<accession>H6D7E6</accession>
<accession>F1R2W6</accession>
<evidence type="ECO:0000250" key="1"/>
<evidence type="ECO:0000255" key="2"/>
<evidence type="ECO:0000256" key="3">
    <source>
        <dbReference type="SAM" id="MobiDB-lite"/>
    </source>
</evidence>
<evidence type="ECO:0000269" key="4">
    <source>
    </source>
</evidence>
<evidence type="ECO:0000305" key="5"/>
<proteinExistence type="evidence at transcript level"/>
<reference key="1">
    <citation type="journal article" date="2011" name="Development">
        <title>Targeted mutation of the talpid3 gene in zebrafish reveals its conserved requirement for ciliogenesis and Hedgehog signalling across the vertebrates.</title>
        <authorList>
            <person name="Ben J."/>
            <person name="Elworthy S."/>
            <person name="Ng A.S."/>
            <person name="van Eeden F."/>
            <person name="Ingham P.W."/>
        </authorList>
    </citation>
    <scope>NUCLEOTIDE SEQUENCE [MRNA]</scope>
    <scope>DEVELOPMENTAL STAGE</scope>
    <scope>SUBCELLULAR LOCATION</scope>
    <scope>DISRUPTION PHENOTYPE</scope>
    <scope>FUNCTION</scope>
    <source>
        <strain>AB</strain>
        <strain>Singapore</strain>
    </source>
</reference>
<sequence length="1554" mass="167601">MDSCCVSVNNKTHFNDSTSSSDAADVLIHSTRAGRDEIQDKSQNKVNIYIRRLSDSEHVHSADERRTEIPPVNLPTASDTAGPEEPLAGIKSNQFAGLFGKTSRKEKSKAQSTIMQTEQLKSKGEDVQISTFSADGRGVVSAALRKRSQGAPIRRNVTVQVLDQDRSQTPAGVQPDPAFPLGDPGTSASVAAITAATLAATAPLMKAQSEMEAQISRVSAELKRLQAAEGSVPPGRTARTDSSSAGRAAHLEEQLNILIQQRLQHLETIQCQQIQLQNRLLGSALDVVASRGNSSGVSQTDSLPLQISGNRSIRLSATDNPSAGRPASVSMDVYRERQTGGHKSPLETPAPRKVIPKPTHWTSSTSTNRPPKSSFKNQGNGRLQDQSPNNRRSPERCALQSVGVERFAMATADNSQPEQSRESQMPSKASVTRSAQEDGSSFVNGQNEQERQGEPTNVSSSSTTVQKASEMLQDLGRLKNEMRSLLQTADAFPVPNAKSTQSSRSRHLAPVATAPPPATAPISMPPEPVDVIAVRAAALNRASVLKSIQPPTSMFEDAGLVLRQVRQSKKTLEENLEAILRAKDGEVLHTQLEALSKNRDVREELRIKKTVDAWINTLSKEIQDDLARESSERIVDAAVSRREAGQRTRAEASAAAKKTSVRAQAGNTRAHTRQPAPAVRNKPAVKQEATQPIVLKSQDDEEYLARLYGKAIYDGQRRTLKKSPYLRFNSPTPKSKPQRPKIVETVKGVKMKSSKTQTSQYVGDVSAMQHSVSEPHFIFSPSDPDKQQQQPGSPVRGYLIPMAIPLGKPRVDCQPPVPSRVIITDKPAIVTTSFPPITVVESKPTPAIRKPNAILLEVQSAPKKRTPQLQIQVQPGVNIESALCSSRQASPTPVIPAESILPPPSIHATEDPHAHEDQQENIFPGTNFLAQADISQETNGGLPDSPIEFKGLPSPPADLYHGPVFPPVPTQSTPLTEPILNTIQQRETLENRLVDWVEQQIMARVITGMFPQPAQADPVHQSEPENSVASDIVEAAGGSGLQLFVDTGVPVDSEVIRHYVNEVLTEIIASMLGQREAQGTPATLVQTQDAQKEDTTVPTPAPTPEPSLKDPPSPVRTPDLSEHLSTATSPEKPPQESASPGPDRIPVGTPITTPIPSPTRVATPSPPTPANQSPEPGSLQIHLWEGSELPLEEEEQPELQPAPVVISVPRVDDQEESVIHPSSPVLSKPQSPPAPPLPPVIQKSESSSSSSSSSSESSCSSSVTVTETETAARHISEGELLLNHGQMAAVRVLEQEGVLLPNFMTSLNGSLHGVQDMDYDPPSEGQVIRAPHLPAHHDPVLSLLARMELGPISQSQQPEGWWEEESSGEVSEGQRPVLTAAEEIVLTGHSLMDQQTIRQSRNTQISPHATLTSPGQVIAEHTGAVVEDGGLSVNLRSSDEQKEAMVYQADTVSSPQPESSQMAQTVHRPAPILVRQYEEEPDFPQLRRLSDDAFFGADEKGEDTFLHTGEGGGGGRGSDVRVMSVRLPSVKQDQESVSLSSVEGDTDSSANDVF</sequence>
<feature type="chain" id="PRO_0000420183" description="Protein TALPID3">
    <location>
        <begin position="1"/>
        <end position="1554"/>
    </location>
</feature>
<feature type="region of interest" description="Disordered" evidence="3">
    <location>
        <begin position="57"/>
        <end position="84"/>
    </location>
</feature>
<feature type="region of interest" description="Disordered" evidence="3">
    <location>
        <begin position="227"/>
        <end position="247"/>
    </location>
</feature>
<feature type="region of interest" description="Disordered" evidence="3">
    <location>
        <begin position="312"/>
        <end position="396"/>
    </location>
</feature>
<feature type="region of interest" description="Disordered" evidence="3">
    <location>
        <begin position="411"/>
        <end position="466"/>
    </location>
</feature>
<feature type="region of interest" description="Disordered" evidence="3">
    <location>
        <begin position="489"/>
        <end position="523"/>
    </location>
</feature>
<feature type="region of interest" description="Required for centrosomal localization" evidence="1">
    <location>
        <begin position="553"/>
        <end position="639"/>
    </location>
</feature>
<feature type="region of interest" description="Disordered" evidence="3">
    <location>
        <begin position="639"/>
        <end position="687"/>
    </location>
</feature>
<feature type="region of interest" description="Disordered" evidence="3">
    <location>
        <begin position="1079"/>
        <end position="1178"/>
    </location>
</feature>
<feature type="region of interest" description="Disordered" evidence="3">
    <location>
        <begin position="1214"/>
        <end position="1265"/>
    </location>
</feature>
<feature type="region of interest" description="Disordered" evidence="3">
    <location>
        <begin position="1354"/>
        <end position="1374"/>
    </location>
</feature>
<feature type="region of interest" description="Disordered" evidence="3">
    <location>
        <begin position="1500"/>
        <end position="1554"/>
    </location>
</feature>
<feature type="coiled-coil region" evidence="2">
    <location>
        <begin position="204"/>
        <end position="270"/>
    </location>
</feature>
<feature type="coiled-coil region" evidence="2">
    <location>
        <begin position="556"/>
        <end position="586"/>
    </location>
</feature>
<feature type="compositionally biased region" description="Basic and acidic residues" evidence="3">
    <location>
        <begin position="57"/>
        <end position="68"/>
    </location>
</feature>
<feature type="compositionally biased region" description="Polar residues" evidence="3">
    <location>
        <begin position="312"/>
        <end position="321"/>
    </location>
</feature>
<feature type="compositionally biased region" description="Polar residues" evidence="3">
    <location>
        <begin position="360"/>
        <end position="391"/>
    </location>
</feature>
<feature type="compositionally biased region" description="Polar residues" evidence="3">
    <location>
        <begin position="412"/>
        <end position="447"/>
    </location>
</feature>
<feature type="compositionally biased region" description="Polar residues" evidence="3">
    <location>
        <begin position="454"/>
        <end position="466"/>
    </location>
</feature>
<feature type="compositionally biased region" description="Pro residues" evidence="3">
    <location>
        <begin position="513"/>
        <end position="523"/>
    </location>
</feature>
<feature type="compositionally biased region" description="Basic and acidic residues" evidence="3">
    <location>
        <begin position="639"/>
        <end position="650"/>
    </location>
</feature>
<feature type="compositionally biased region" description="Polar residues" evidence="3">
    <location>
        <begin position="1080"/>
        <end position="1089"/>
    </location>
</feature>
<feature type="compositionally biased region" description="Pro residues" evidence="3">
    <location>
        <begin position="1099"/>
        <end position="1115"/>
    </location>
</feature>
<feature type="compositionally biased region" description="Pro residues" evidence="3">
    <location>
        <begin position="1230"/>
        <end position="1239"/>
    </location>
</feature>
<feature type="compositionally biased region" description="Low complexity" evidence="3">
    <location>
        <begin position="1240"/>
        <end position="1265"/>
    </location>
</feature>
<feature type="compositionally biased region" description="Polar residues" evidence="3">
    <location>
        <begin position="1535"/>
        <end position="1554"/>
    </location>
</feature>
<name>TALD3_DANRE</name>
<keyword id="KW-0966">Cell projection</keyword>
<keyword id="KW-0970">Cilium biogenesis/degradation</keyword>
<keyword id="KW-0175">Coiled coil</keyword>
<keyword id="KW-0963">Cytoplasm</keyword>
<keyword id="KW-0206">Cytoskeleton</keyword>
<keyword id="KW-1185">Reference proteome</keyword>
<gene>
    <name type="primary">talpid3</name>
</gene>
<comment type="function">
    <text evidence="4">Required for ciliogenesis and sonic hedgehog/SHH signaling.</text>
</comment>
<comment type="subcellular location">
    <subcellularLocation>
        <location evidence="4">Cytoplasm</location>
        <location evidence="4">Cytoskeleton</location>
        <location evidence="4">Cilium basal body</location>
    </subcellularLocation>
    <subcellularLocation>
        <location evidence="4">Cytoplasm</location>
        <location evidence="4">Cytoskeleton</location>
        <location evidence="4">Microtubule organizing center</location>
        <location evidence="4">Centrosome</location>
        <location evidence="4">Centriole</location>
    </subcellularLocation>
</comment>
<comment type="developmental stage">
    <text evidence="4">Ubiquitously distributed in embryos from early cleavage stages through to 2 dpf.</text>
</comment>
<comment type="disruption phenotype">
    <text evidence="4">Homozygous for these mutant alleles complete embryogenesis normally, but manifest a cystic kidney phenotype during the early larval stages and die within a month of hatching. Elimination of maternally derived talpid3 activity by germline replacement resulted in embryonic lethality of talpid3 homozygotes. The phenotype of such maternal and zygotic mutant show absence of primary and motile cilia as well as aberrant Hedgehog signaling.</text>
</comment>
<comment type="similarity">
    <text evidence="5">Belongs to the TALPID3 family.</text>
</comment>